<proteinExistence type="evidence at protein level"/>
<keyword id="KW-0966">Cell projection</keyword>
<keyword id="KW-0969">Cilium</keyword>
<keyword id="KW-0963">Cytoplasm</keyword>
<keyword id="KW-0433">Leucine-rich repeat</keyword>
<keyword id="KW-1185">Reference proteome</keyword>
<keyword id="KW-0677">Repeat</keyword>
<reference key="1">
    <citation type="journal article" date="2004" name="Development">
        <title>A genetic screen in zebrafish identifies cilia genes as a principal cause of cystic kidney.</title>
        <authorList>
            <person name="Sun Z."/>
            <person name="Amsterdam A."/>
            <person name="Pazour G.J."/>
            <person name="Cole D.G."/>
            <person name="Miller M.S."/>
            <person name="Hopkins N."/>
        </authorList>
    </citation>
    <scope>NUCLEOTIDE SEQUENCE [MRNA]</scope>
    <scope>DEVELOPMENTAL STAGE</scope>
</reference>
<reference key="2">
    <citation type="submission" date="2008-04" db="EMBL/GenBank/DDBJ databases">
        <authorList>
            <consortium name="NIH - Zebrafish Gene Collection (ZGC) project"/>
        </authorList>
    </citation>
    <scope>NUCLEOTIDE SEQUENCE [LARGE SCALE MRNA]</scope>
</reference>
<reference key="3">
    <citation type="journal article" date="2007" name="Proc. Natl. Acad. Sci. U.S.A.">
        <title>Analysis and functional evaluation of the hair-cell transcriptome.</title>
        <authorList>
            <person name="McDermott B.M. Jr."/>
            <person name="Baucom J.M."/>
            <person name="Hudspeth A.J."/>
        </authorList>
    </citation>
    <scope>SUBCELLULAR LOCATION</scope>
    <scope>TISSUE SPECIFICITY</scope>
</reference>
<reference key="4">
    <citation type="journal article" date="2008" name="Dev. Cell">
        <title>Cystic kidney gene seahorse regulates cilia-mediated processes and Wnt pathways.</title>
        <authorList>
            <person name="Kishimoto N."/>
            <person name="Cao Y."/>
            <person name="Park A."/>
            <person name="Sun Z."/>
        </authorList>
    </citation>
    <scope>FUNCTION</scope>
    <scope>INTERACTION WITH DVL2</scope>
    <scope>SUBCELLULAR LOCATION</scope>
    <scope>DEVELOPMENTAL STAGE</scope>
</reference>
<reference key="5">
    <citation type="journal article" date="2009" name="Development">
        <title>Mutations in zebrafish leucine-rich repeat-containing six-like affect cilia motility and result in pronephric cysts, but have variable effects on left-right patterning.</title>
        <authorList>
            <person name="Serluca F.C."/>
            <person name="Xu B."/>
            <person name="Okabe N."/>
            <person name="Baker K."/>
            <person name="Lin S.Y."/>
            <person name="Sullivan-Brown J."/>
            <person name="Konieczkowski D.J."/>
            <person name="Jaffe K.M."/>
            <person name="Bradner J.M."/>
            <person name="Fishman M.C."/>
            <person name="Burdine R.D."/>
        </authorList>
    </citation>
    <scope>FUNCTION</scope>
    <scope>INTERACTION WITH DVL2</scope>
    <scope>DEVELOPMENTAL STAGE</scope>
</reference>
<reference key="6">
    <citation type="journal article" date="2016" name="Cell Rep.">
        <title>c21orf59/kurly controls both cilia motility and polarization.</title>
        <authorList>
            <person name="Jaffe K.M."/>
            <person name="Grimes D.T."/>
            <person name="Schottenfeld-Roames J."/>
            <person name="Werner M.E."/>
            <person name="Ku T.S."/>
            <person name="Kim S.K."/>
            <person name="Pelliccia J.L."/>
            <person name="Morante N.F."/>
            <person name="Mitchell B.J."/>
            <person name="Burdine R.D."/>
        </authorList>
    </citation>
    <scope>INTERACTION WITH KUR</scope>
</reference>
<protein>
    <recommendedName>
        <fullName evidence="8">Dynein axonemal assembly factor 11</fullName>
        <shortName evidence="8">DNAAF11</shortName>
    </recommendedName>
    <alternativeName>
        <fullName>Leucine-rich repeat-containing 6-like protein</fullName>
    </alternativeName>
    <alternativeName>
        <fullName>Leucine-rich repeat-containing protein 6</fullName>
    </alternativeName>
    <alternativeName>
        <fullName>Protein tilB homolog</fullName>
    </alternativeName>
    <alternativeName>
        <fullName evidence="7">Seahorse</fullName>
    </alternativeName>
</protein>
<sequence length="440" mass="50677">MVRISEDLIRRRAEHNNGEIFSLEELSLHQQDIQRIEHIHKWCRDLKILYLQNNLIPKIENVGRLKKLEYLNLALNNIEVIENLEGCESLQKLDLTVNFVGRLSSVETLKHNLHLKELYLVGNPCAEYQGYRQYVVATVPQLQSLDGKEISRAERIQALQELDAVRTRVLQQETKYLEEREKQKSNANEHPEINQSLSESQNGTQQYPESSSKTHTEAEDEEREFWEKPCPFTPESRLEAHRHLEEKRRANEKEKEKPKTKTPRTLITPDGRVLNVNEPKLDFSLFEDENNCLLLDLHVYRHMDSSLLDVDVQPMYVRVTVKGKVFQLVLPAEVKPDSSSAQRSQTTGHLLLILPLANEDVKPKKRTIRPTSVTSNQNNKKDTRAAPRRELLEVDPGLAGSLANIVPKGQESSHNPQRCGLEERPVSKDFVDDPEVPPLM</sequence>
<gene>
    <name type="primary">dnaaf11</name>
    <name type="synonym">lrrc6</name>
    <name type="synonym">lrrc6l</name>
</gene>
<organism>
    <name type="scientific">Danio rerio</name>
    <name type="common">Zebrafish</name>
    <name type="synonym">Brachydanio rerio</name>
    <dbReference type="NCBI Taxonomy" id="7955"/>
    <lineage>
        <taxon>Eukaryota</taxon>
        <taxon>Metazoa</taxon>
        <taxon>Chordata</taxon>
        <taxon>Craniata</taxon>
        <taxon>Vertebrata</taxon>
        <taxon>Euteleostomi</taxon>
        <taxon>Actinopterygii</taxon>
        <taxon>Neopterygii</taxon>
        <taxon>Teleostei</taxon>
        <taxon>Ostariophysi</taxon>
        <taxon>Cypriniformes</taxon>
        <taxon>Danionidae</taxon>
        <taxon>Danioninae</taxon>
        <taxon>Danio</taxon>
    </lineage>
</organism>
<evidence type="ECO:0000256" key="1">
    <source>
        <dbReference type="SAM" id="MobiDB-lite"/>
    </source>
</evidence>
<evidence type="ECO:0000269" key="2">
    <source>
    </source>
</evidence>
<evidence type="ECO:0000269" key="3">
    <source>
    </source>
</evidence>
<evidence type="ECO:0000269" key="4">
    <source>
    </source>
</evidence>
<evidence type="ECO:0000269" key="5">
    <source>
    </source>
</evidence>
<evidence type="ECO:0000269" key="6">
    <source>
    </source>
</evidence>
<evidence type="ECO:0000303" key="7">
    <source>
    </source>
</evidence>
<evidence type="ECO:0000305" key="8"/>
<evidence type="ECO:0000305" key="9">
    <source>
    </source>
</evidence>
<name>DAA11_DANRE</name>
<comment type="function">
    <text evidence="4 5">Plays a crucial role in regulating cilia motility in pronephric tubules, cloaca and neural tube. Required for establishing left-right asymmetry of the body plan; controls cell fate and convergent extension (CE) movements during gastrulation, respectively, via the Wnt and the planar cell polarity (PCP) signaling pathways. Required for the proper development of renal glomeruli and tubules.</text>
</comment>
<comment type="subunit">
    <text evidence="4 5 6">Interacts with dvl2 (PubMed:18539122, PubMed:19395640). Interacts with kur (PubMed:26904945).</text>
</comment>
<comment type="subcellular location">
    <subcellularLocation>
        <location evidence="4">Cytoplasm</location>
    </subcellularLocation>
    <subcellularLocation>
        <location evidence="9">Dynein axonemal particle</location>
    </subcellularLocation>
    <subcellularLocation>
        <location evidence="4">Cell projection</location>
        <location evidence="4">Cilium</location>
    </subcellularLocation>
    <text>Localized to cytoplasmic puncta in ciliated cells. In the semicircular canal, localized to kinocilia.</text>
</comment>
<comment type="tissue specificity">
    <text evidence="3">Expressed in kinocilia of hair cells.</text>
</comment>
<comment type="developmental stage">
    <text evidence="2 4 5">Maternally and zygotically expressed. Expressed in the embryo at the 256- and 512-cell, sphere and epiboly stages. Expressed in ciliated tissues, including Kupffer's vesicle, otic vesicle, pronephric duct and floor plate of the neural tube. Expressed in the floor plate and chordoneural hinge at 24 hpf. Expressed in the anteriormost tubules adjacent to the glomerular region at 36 hpf. Expressed in the pronephric tubules from mid-somitogenesis through 48 hpf.</text>
</comment>
<comment type="miscellaneous">
    <text>Mutants show development of polycystic kidney disease and left-right (LR) asymmetry defects.</text>
</comment>
<comment type="similarity">
    <text evidence="8">Belongs to the tilB family.</text>
</comment>
<feature type="chain" id="PRO_0000414859" description="Dynein axonemal assembly factor 11">
    <location>
        <begin position="1"/>
        <end position="440"/>
    </location>
</feature>
<feature type="repeat" description="LRR 1">
    <location>
        <begin position="20"/>
        <end position="43"/>
    </location>
</feature>
<feature type="repeat" description="LRR 2">
    <location>
        <begin position="44"/>
        <end position="65"/>
    </location>
</feature>
<feature type="repeat" description="LRR 3">
    <location>
        <begin position="66"/>
        <end position="89"/>
    </location>
</feature>
<feature type="repeat" description="LRR 4">
    <location>
        <begin position="90"/>
        <end position="110"/>
    </location>
</feature>
<feature type="domain" description="LRRCT">
    <location>
        <begin position="128"/>
        <end position="146"/>
    </location>
</feature>
<feature type="domain" description="CS">
    <location>
        <begin position="276"/>
        <end position="374"/>
    </location>
</feature>
<feature type="region of interest" description="Disordered" evidence="1">
    <location>
        <begin position="178"/>
        <end position="267"/>
    </location>
</feature>
<feature type="region of interest" description="Disordered" evidence="1">
    <location>
        <begin position="363"/>
        <end position="440"/>
    </location>
</feature>
<feature type="compositionally biased region" description="Basic and acidic residues" evidence="1">
    <location>
        <begin position="178"/>
        <end position="192"/>
    </location>
</feature>
<feature type="compositionally biased region" description="Polar residues" evidence="1">
    <location>
        <begin position="193"/>
        <end position="211"/>
    </location>
</feature>
<feature type="compositionally biased region" description="Basic and acidic residues" evidence="1">
    <location>
        <begin position="236"/>
        <end position="259"/>
    </location>
</feature>
<feature type="compositionally biased region" description="Polar residues" evidence="1">
    <location>
        <begin position="369"/>
        <end position="378"/>
    </location>
</feature>
<feature type="compositionally biased region" description="Basic and acidic residues" evidence="1">
    <location>
        <begin position="379"/>
        <end position="392"/>
    </location>
</feature>
<feature type="compositionally biased region" description="Basic and acidic residues" evidence="1">
    <location>
        <begin position="420"/>
        <end position="431"/>
    </location>
</feature>
<feature type="sequence conflict" description="In Ref. 1; AAT39121." evidence="8" ref="1">
    <original>F</original>
    <variation>S</variation>
    <location>
        <position position="99"/>
    </location>
</feature>
<feature type="sequence conflict" description="In Ref. 1; AAT39121." evidence="8" ref="1">
    <original>P</original>
    <variation>R</variation>
    <location>
        <position position="279"/>
    </location>
</feature>
<feature type="sequence conflict" description="In Ref. 1; AAT39121." evidence="8" ref="1">
    <original>F</original>
    <variation>S</variation>
    <location>
        <position position="286"/>
    </location>
</feature>
<feature type="sequence conflict" description="In Ref. 1; AAT39121." evidence="8" ref="1">
    <original>H</original>
    <variation>N</variation>
    <location>
        <position position="298"/>
    </location>
</feature>
<feature type="sequence conflict" description="In Ref. 1; AAT39121." evidence="8" ref="1">
    <original>T</original>
    <variation>S</variation>
    <location>
        <position position="367"/>
    </location>
</feature>
<feature type="sequence conflict" description="In Ref. 1; AAT39121." evidence="8" ref="1">
    <original>M</original>
    <variation>V</variation>
    <location>
        <position position="440"/>
    </location>
</feature>
<accession>B3DH20</accession>
<accession>Q6IVV9</accession>
<dbReference type="EMBL" id="AY618925">
    <property type="protein sequence ID" value="AAT39121.1"/>
    <property type="molecule type" value="mRNA"/>
</dbReference>
<dbReference type="EMBL" id="BC162607">
    <property type="protein sequence ID" value="AAI62607.1"/>
    <property type="molecule type" value="mRNA"/>
</dbReference>
<dbReference type="RefSeq" id="NP_001002311.1">
    <property type="nucleotide sequence ID" value="NM_001002311.1"/>
</dbReference>
<dbReference type="SMR" id="B3DH20"/>
<dbReference type="FunCoup" id="B3DH20">
    <property type="interactions" value="500"/>
</dbReference>
<dbReference type="STRING" id="7955.ENSDARP00000113887"/>
<dbReference type="PaxDb" id="7955-ENSDARP00000113887"/>
<dbReference type="PeptideAtlas" id="B3DH20"/>
<dbReference type="GeneID" id="432388"/>
<dbReference type="KEGG" id="dre:432388"/>
<dbReference type="AGR" id="ZFIN:ZDB-GENE-040827-2"/>
<dbReference type="CTD" id="23639"/>
<dbReference type="ZFIN" id="ZDB-GENE-040827-2">
    <property type="gene designation" value="dnaaf11"/>
</dbReference>
<dbReference type="eggNOG" id="KOG0531">
    <property type="taxonomic scope" value="Eukaryota"/>
</dbReference>
<dbReference type="InParanoid" id="B3DH20"/>
<dbReference type="OrthoDB" id="10250990at2759"/>
<dbReference type="PRO" id="PR:B3DH20"/>
<dbReference type="Proteomes" id="UP000000437">
    <property type="component" value="Alternate scaffold 2"/>
</dbReference>
<dbReference type="Proteomes" id="UP000000437">
    <property type="component" value="Chromosome 2"/>
</dbReference>
<dbReference type="GO" id="GO:0005929">
    <property type="term" value="C:cilium"/>
    <property type="evidence" value="ECO:0007669"/>
    <property type="project" value="UniProtKB-SubCell"/>
</dbReference>
<dbReference type="GO" id="GO:0005737">
    <property type="term" value="C:cytoplasm"/>
    <property type="evidence" value="ECO:0000314"/>
    <property type="project" value="ZFIN"/>
</dbReference>
<dbReference type="GO" id="GO:0005829">
    <property type="term" value="C:cytosol"/>
    <property type="evidence" value="ECO:0000250"/>
    <property type="project" value="UniProtKB"/>
</dbReference>
<dbReference type="GO" id="GO:0120293">
    <property type="term" value="C:dynein axonemal particle"/>
    <property type="evidence" value="ECO:0000250"/>
    <property type="project" value="UniProtKB"/>
</dbReference>
<dbReference type="GO" id="GO:0005576">
    <property type="term" value="C:extracellular region"/>
    <property type="evidence" value="ECO:0007669"/>
    <property type="project" value="GOC"/>
</dbReference>
<dbReference type="GO" id="GO:0070286">
    <property type="term" value="P:axonemal dynein complex assembly"/>
    <property type="evidence" value="ECO:0000250"/>
    <property type="project" value="UniProtKB"/>
</dbReference>
<dbReference type="GO" id="GO:0090660">
    <property type="term" value="P:cerebrospinal fluid circulation"/>
    <property type="evidence" value="ECO:0000250"/>
    <property type="project" value="UniProtKB"/>
</dbReference>
<dbReference type="GO" id="GO:0060271">
    <property type="term" value="P:cilium assembly"/>
    <property type="evidence" value="ECO:0000315"/>
    <property type="project" value="ZFIN"/>
</dbReference>
<dbReference type="GO" id="GO:0060294">
    <property type="term" value="P:cilium movement involved in cell motility"/>
    <property type="evidence" value="ECO:0000315"/>
    <property type="project" value="ZFIN"/>
</dbReference>
<dbReference type="GO" id="GO:0060027">
    <property type="term" value="P:convergent extension involved in gastrulation"/>
    <property type="evidence" value="ECO:0000316"/>
    <property type="project" value="ZFIN"/>
</dbReference>
<dbReference type="GO" id="GO:0007368">
    <property type="term" value="P:determination of left/right symmetry"/>
    <property type="evidence" value="ECO:0000315"/>
    <property type="project" value="ZFIN"/>
</dbReference>
<dbReference type="GO" id="GO:0009953">
    <property type="term" value="P:dorsal/ventral pattern formation"/>
    <property type="evidence" value="ECO:0000315"/>
    <property type="project" value="ZFIN"/>
</dbReference>
<dbReference type="GO" id="GO:0003143">
    <property type="term" value="P:embryonic heart tube morphogenesis"/>
    <property type="evidence" value="ECO:0000315"/>
    <property type="project" value="ZFIN"/>
</dbReference>
<dbReference type="GO" id="GO:0060287">
    <property type="term" value="P:epithelial cilium movement involved in determination of left/right asymmetry"/>
    <property type="evidence" value="ECO:0000250"/>
    <property type="project" value="UniProtKB"/>
</dbReference>
<dbReference type="GO" id="GO:0003351">
    <property type="term" value="P:epithelial cilium movement involved in extracellular fluid movement"/>
    <property type="evidence" value="ECO:0000315"/>
    <property type="project" value="ZFIN"/>
</dbReference>
<dbReference type="GO" id="GO:0051649">
    <property type="term" value="P:establishment of localization in cell"/>
    <property type="evidence" value="ECO:0000250"/>
    <property type="project" value="UniProtKB"/>
</dbReference>
<dbReference type="GO" id="GO:0030317">
    <property type="term" value="P:flagellated sperm motility"/>
    <property type="evidence" value="ECO:0000250"/>
    <property type="project" value="UniProtKB"/>
</dbReference>
<dbReference type="GO" id="GO:0003146">
    <property type="term" value="P:heart jogging"/>
    <property type="evidence" value="ECO:0000315"/>
    <property type="project" value="ZFIN"/>
</dbReference>
<dbReference type="GO" id="GO:0001947">
    <property type="term" value="P:heart looping"/>
    <property type="evidence" value="ECO:0000315"/>
    <property type="project" value="ZFIN"/>
</dbReference>
<dbReference type="GO" id="GO:0044458">
    <property type="term" value="P:motile cilium assembly"/>
    <property type="evidence" value="ECO:0000316"/>
    <property type="project" value="ZFIN"/>
</dbReference>
<dbReference type="GO" id="GO:0036158">
    <property type="term" value="P:outer dynein arm assembly"/>
    <property type="evidence" value="ECO:0000250"/>
    <property type="project" value="UniProtKB"/>
</dbReference>
<dbReference type="GO" id="GO:0048793">
    <property type="term" value="P:pronephros development"/>
    <property type="evidence" value="ECO:0000315"/>
    <property type="project" value="ZFIN"/>
</dbReference>
<dbReference type="GO" id="GO:0061512">
    <property type="term" value="P:protein localization to cilium"/>
    <property type="evidence" value="ECO:0000250"/>
    <property type="project" value="UniProtKB"/>
</dbReference>
<dbReference type="GO" id="GO:0120229">
    <property type="term" value="P:protein localization to motile cilium"/>
    <property type="evidence" value="ECO:0000250"/>
    <property type="project" value="UniProtKB"/>
</dbReference>
<dbReference type="FunFam" id="3.80.10.10:FF:000052">
    <property type="entry name" value="Leucine rich repeat containing 6"/>
    <property type="match status" value="1"/>
</dbReference>
<dbReference type="Gene3D" id="3.80.10.10">
    <property type="entry name" value="Ribonuclease Inhibitor"/>
    <property type="match status" value="1"/>
</dbReference>
<dbReference type="InterPro" id="IPR056496">
    <property type="entry name" value="CS_DNAAF11_C"/>
</dbReference>
<dbReference type="InterPro" id="IPR001611">
    <property type="entry name" value="Leu-rich_rpt"/>
</dbReference>
<dbReference type="InterPro" id="IPR032675">
    <property type="entry name" value="LRR_dom_sf"/>
</dbReference>
<dbReference type="PANTHER" id="PTHR18849:SF0">
    <property type="entry name" value="CILIA- AND FLAGELLA-ASSOCIATED PROTEIN 410-RELATED"/>
    <property type="match status" value="1"/>
</dbReference>
<dbReference type="PANTHER" id="PTHR18849">
    <property type="entry name" value="LEUCINE RICH REPEAT PROTEIN"/>
    <property type="match status" value="1"/>
</dbReference>
<dbReference type="Pfam" id="PF23602">
    <property type="entry name" value="CS_DNAAF11_C"/>
    <property type="match status" value="1"/>
</dbReference>
<dbReference type="Pfam" id="PF14580">
    <property type="entry name" value="LRR_9"/>
    <property type="match status" value="1"/>
</dbReference>
<dbReference type="SMART" id="SM00365">
    <property type="entry name" value="LRR_SD22"/>
    <property type="match status" value="2"/>
</dbReference>
<dbReference type="SUPFAM" id="SSF52058">
    <property type="entry name" value="L domain-like"/>
    <property type="match status" value="1"/>
</dbReference>
<dbReference type="PROSITE" id="PS51450">
    <property type="entry name" value="LRR"/>
    <property type="match status" value="4"/>
</dbReference>